<name>MIC19_BOVIN</name>
<comment type="function">
    <text evidence="2">Component of the MICOS complex, a large protein complex of the mitochondrial inner membrane that plays crucial roles in the maintenance of crista junctions, inner membrane architecture, and formation of contact sites to the outer membrane. Has also been shown to function as a transcription factor which binds to the BAG1 promoter and represses BAG1 transcription. Plays an important role in the maintenance of the MICOS complex stability and the mitochondrial cristae morphology.</text>
</comment>
<comment type="subunit">
    <text evidence="1 2">Component of the mitochondrial contact site and cristae organizing system (MICOS) complex, composed of at least MICOS10/MIC10, CHCHD3/MIC19, CHCHD6/MIC25, APOOL/MIC27, IMMT/MIC60, APOO/MIC23/MIC26 and MICOS13/MIC13. This complex was also known under the names MINOS or MitOS complex. The MICOS complex associates with mitochondrial outer membrane proteins SAMM50, MTX1 and MTX2 (together described as components of the mitochondrial outer membrane sorting assembly machinery (SAM) complex) and DNAJC11, mitochondrial inner membrane protein TMEM11 and with HSPA9. The MICOS and SAM complexes together with DNAJC11 are part of a large protein complex spanning both membranes termed the mitochondrial intermembrane space bridging (MIB) complex. Interacts with HSPA1A/HSPA1B and OPA1, preferentially with the soluble OPA1 form. Interacts with IMMT/MIC60.</text>
</comment>
<comment type="subcellular location">
    <subcellularLocation>
        <location evidence="1">Mitochondrion inner membrane</location>
        <topology evidence="1">Lipid-anchor</topology>
        <orientation evidence="1">Intermembrane side</orientation>
    </subcellularLocation>
    <subcellularLocation>
        <location evidence="2">Cytoplasm</location>
    </subcellularLocation>
    <subcellularLocation>
        <location evidence="2">Nucleus</location>
    </subcellularLocation>
    <subcellularLocation>
        <location evidence="2">Mitochondrion</location>
    </subcellularLocation>
</comment>
<comment type="similarity">
    <text evidence="5">Belongs to the MICOS complex subunit Mic19 family. Metazoan Mic19 subfamily.</text>
</comment>
<feature type="initiator methionine" description="Removed" evidence="2">
    <location>
        <position position="1"/>
    </location>
</feature>
<feature type="chain" id="PRO_0000129162" description="MICOS complex subunit MIC19">
    <location>
        <begin position="2"/>
        <end position="227"/>
    </location>
</feature>
<feature type="domain" description="CHCH" evidence="3">
    <location>
        <begin position="180"/>
        <end position="222"/>
    </location>
</feature>
<feature type="region of interest" description="Disordered" evidence="4">
    <location>
        <begin position="34"/>
        <end position="60"/>
    </location>
</feature>
<feature type="short sequence motif" description="Cx9C motif 1" evidence="3">
    <location>
        <begin position="183"/>
        <end position="193"/>
    </location>
</feature>
<feature type="short sequence motif" description="Cx9C motif 2" evidence="3">
    <location>
        <begin position="204"/>
        <end position="214"/>
    </location>
</feature>
<feature type="compositionally biased region" description="Polar residues" evidence="4">
    <location>
        <begin position="39"/>
        <end position="55"/>
    </location>
</feature>
<feature type="modified residue" description="Phosphoserine" evidence="2">
    <location>
        <position position="29"/>
    </location>
</feature>
<feature type="modified residue" description="Phosphotyrosine" evidence="2">
    <location>
        <position position="49"/>
    </location>
</feature>
<feature type="modified residue" description="Phosphoserine" evidence="2">
    <location>
        <position position="50"/>
    </location>
</feature>
<feature type="modified residue" description="Phosphoserine" evidence="1">
    <location>
        <position position="56"/>
    </location>
</feature>
<feature type="modified residue" description="Phosphoserine" evidence="2">
    <location>
        <position position="58"/>
    </location>
</feature>
<feature type="modified residue" description="N6-acetyllysine" evidence="2">
    <location>
        <position position="142"/>
    </location>
</feature>
<feature type="lipid moiety-binding region" description="N-myristoyl glycine" evidence="1">
    <location>
        <position position="2"/>
    </location>
</feature>
<feature type="disulfide bond" evidence="3">
    <location>
        <begin position="183"/>
        <end position="214"/>
    </location>
</feature>
<feature type="disulfide bond" evidence="3">
    <location>
        <begin position="193"/>
        <end position="204"/>
    </location>
</feature>
<protein>
    <recommendedName>
        <fullName>MICOS complex subunit MIC19</fullName>
    </recommendedName>
    <alternativeName>
        <fullName>Coiled-coil-helix-coiled-coil-helix domain-containing protein 3</fullName>
    </alternativeName>
</protein>
<evidence type="ECO:0000250" key="1">
    <source>
        <dbReference type="UniProtKB" id="Q9CRB9"/>
    </source>
</evidence>
<evidence type="ECO:0000250" key="2">
    <source>
        <dbReference type="UniProtKB" id="Q9NX63"/>
    </source>
</evidence>
<evidence type="ECO:0000255" key="3">
    <source>
        <dbReference type="PROSITE-ProRule" id="PRU01150"/>
    </source>
</evidence>
<evidence type="ECO:0000256" key="4">
    <source>
        <dbReference type="SAM" id="MobiDB-lite"/>
    </source>
</evidence>
<evidence type="ECO:0000305" key="5"/>
<sequence length="227" mass="26100">MGGTASTRRVTFEADENENITVVKGIRLSENVIDRMKETSPSGPKSQRYSGTYGASVSDEELKRRVAEELALEQAKKESENQKRLKQSKELDAEKAFANEQLTRAILRERISNEEERAKAKHLAKQLEEKDRVIKKQDAFYKEQLARLEERSSEFYKVTTEQYQKAAEEVEAKFKRYEYHPVCADLQAQILQCYRQNTQQTLSCSALASQYMRCVNQAKQSTLEKGG</sequence>
<organism>
    <name type="scientific">Bos taurus</name>
    <name type="common">Bovine</name>
    <dbReference type="NCBI Taxonomy" id="9913"/>
    <lineage>
        <taxon>Eukaryota</taxon>
        <taxon>Metazoa</taxon>
        <taxon>Chordata</taxon>
        <taxon>Craniata</taxon>
        <taxon>Vertebrata</taxon>
        <taxon>Euteleostomi</taxon>
        <taxon>Mammalia</taxon>
        <taxon>Eutheria</taxon>
        <taxon>Laurasiatheria</taxon>
        <taxon>Artiodactyla</taxon>
        <taxon>Ruminantia</taxon>
        <taxon>Pecora</taxon>
        <taxon>Bovidae</taxon>
        <taxon>Bovinae</taxon>
        <taxon>Bos</taxon>
    </lineage>
</organism>
<accession>Q5E9D3</accession>
<accession>Q3T0L4</accession>
<dbReference type="EMBL" id="BT020987">
    <property type="protein sequence ID" value="AAX09004.1"/>
    <property type="molecule type" value="mRNA"/>
</dbReference>
<dbReference type="EMBL" id="BC102347">
    <property type="protein sequence ID" value="AAI02348.1"/>
    <property type="molecule type" value="mRNA"/>
</dbReference>
<dbReference type="RefSeq" id="NP_001030552.1">
    <property type="nucleotide sequence ID" value="NM_001035475.1"/>
</dbReference>
<dbReference type="SMR" id="Q5E9D3"/>
<dbReference type="FunCoup" id="Q5E9D3">
    <property type="interactions" value="1439"/>
</dbReference>
<dbReference type="STRING" id="9913.ENSBTAP00000034331"/>
<dbReference type="PaxDb" id="9913-ENSBTAP00000034331"/>
<dbReference type="PeptideAtlas" id="Q5E9D3"/>
<dbReference type="Ensembl" id="ENSBTAT00000034438.4">
    <property type="protein sequence ID" value="ENSBTAP00000034331.3"/>
    <property type="gene ID" value="ENSBTAG00000024723.5"/>
</dbReference>
<dbReference type="GeneID" id="616477"/>
<dbReference type="KEGG" id="bta:616477"/>
<dbReference type="CTD" id="54927"/>
<dbReference type="VEuPathDB" id="HostDB:ENSBTAG00000024723"/>
<dbReference type="VGNC" id="VGNC:27272">
    <property type="gene designation" value="CHCHD3"/>
</dbReference>
<dbReference type="eggNOG" id="KOG4083">
    <property type="taxonomic scope" value="Eukaryota"/>
</dbReference>
<dbReference type="GeneTree" id="ENSGT00390000000903"/>
<dbReference type="HOGENOM" id="CLU_049040_2_1_1"/>
<dbReference type="InParanoid" id="Q5E9D3"/>
<dbReference type="OMA" id="LANQYQH"/>
<dbReference type="OrthoDB" id="9944291at2759"/>
<dbReference type="TreeFam" id="TF326279"/>
<dbReference type="Proteomes" id="UP000009136">
    <property type="component" value="Chromosome 4"/>
</dbReference>
<dbReference type="Bgee" id="ENSBTAG00000024723">
    <property type="expression patterns" value="Expressed in corpus luteum and 105 other cell types or tissues"/>
</dbReference>
<dbReference type="GO" id="GO:0061617">
    <property type="term" value="C:MICOS complex"/>
    <property type="evidence" value="ECO:0000318"/>
    <property type="project" value="GO_Central"/>
</dbReference>
<dbReference type="GO" id="GO:0005743">
    <property type="term" value="C:mitochondrial inner membrane"/>
    <property type="evidence" value="ECO:0000250"/>
    <property type="project" value="UniProtKB"/>
</dbReference>
<dbReference type="GO" id="GO:0005634">
    <property type="term" value="C:nucleus"/>
    <property type="evidence" value="ECO:0007669"/>
    <property type="project" value="UniProtKB-SubCell"/>
</dbReference>
<dbReference type="GO" id="GO:0060090">
    <property type="term" value="F:molecular adaptor activity"/>
    <property type="evidence" value="ECO:0000250"/>
    <property type="project" value="UniProtKB"/>
</dbReference>
<dbReference type="GO" id="GO:0019902">
    <property type="term" value="F:phosphatase binding"/>
    <property type="evidence" value="ECO:0000250"/>
    <property type="project" value="UniProtKB"/>
</dbReference>
<dbReference type="GO" id="GO:0007007">
    <property type="term" value="P:inner mitochondrial membrane organization"/>
    <property type="evidence" value="ECO:0000318"/>
    <property type="project" value="GO_Central"/>
</dbReference>
<dbReference type="InterPro" id="IPR007964">
    <property type="entry name" value="MIC19/MIC25"/>
</dbReference>
<dbReference type="InterPro" id="IPR052632">
    <property type="entry name" value="MICOS_subunit_Mic19"/>
</dbReference>
<dbReference type="PANTHER" id="PTHR21588">
    <property type="entry name" value="COILED-COIL-HELIX-COILED-COIL-HELIX DOMAIN CONTAINING 6"/>
    <property type="match status" value="1"/>
</dbReference>
<dbReference type="PANTHER" id="PTHR21588:SF18">
    <property type="entry name" value="MICOS COMPLEX SUBUNIT MIC19"/>
    <property type="match status" value="1"/>
</dbReference>
<dbReference type="Pfam" id="PF05300">
    <property type="entry name" value="MIC19_MIC25"/>
    <property type="match status" value="1"/>
</dbReference>
<dbReference type="PROSITE" id="PS51808">
    <property type="entry name" value="CHCH"/>
    <property type="match status" value="1"/>
</dbReference>
<reference key="1">
    <citation type="journal article" date="2005" name="BMC Genomics">
        <title>Characterization of 954 bovine full-CDS cDNA sequences.</title>
        <authorList>
            <person name="Harhay G.P."/>
            <person name="Sonstegard T.S."/>
            <person name="Keele J.W."/>
            <person name="Heaton M.P."/>
            <person name="Clawson M.L."/>
            <person name="Snelling W.M."/>
            <person name="Wiedmann R.T."/>
            <person name="Van Tassell C.P."/>
            <person name="Smith T.P.L."/>
        </authorList>
    </citation>
    <scope>NUCLEOTIDE SEQUENCE [LARGE SCALE MRNA]</scope>
</reference>
<reference key="2">
    <citation type="submission" date="2005-08" db="EMBL/GenBank/DDBJ databases">
        <authorList>
            <consortium name="NIH - Mammalian Gene Collection (MGC) project"/>
        </authorList>
    </citation>
    <scope>NUCLEOTIDE SEQUENCE [LARGE SCALE MRNA]</scope>
    <source>
        <strain>Crossbred X Angus</strain>
        <tissue>Ileum</tissue>
    </source>
</reference>
<gene>
    <name type="primary">CHCHD3</name>
    <name type="synonym">MIC19</name>
</gene>
<proteinExistence type="evidence at transcript level"/>
<keyword id="KW-0007">Acetylation</keyword>
<keyword id="KW-0963">Cytoplasm</keyword>
<keyword id="KW-1015">Disulfide bond</keyword>
<keyword id="KW-0449">Lipoprotein</keyword>
<keyword id="KW-0472">Membrane</keyword>
<keyword id="KW-0496">Mitochondrion</keyword>
<keyword id="KW-0999">Mitochondrion inner membrane</keyword>
<keyword id="KW-0519">Myristate</keyword>
<keyword id="KW-0539">Nucleus</keyword>
<keyword id="KW-0597">Phosphoprotein</keyword>
<keyword id="KW-1185">Reference proteome</keyword>
<keyword id="KW-0678">Repressor</keyword>
<keyword id="KW-0804">Transcription</keyword>
<keyword id="KW-0805">Transcription regulation</keyword>